<accession>A8MQN2</accession>
<accession>B9DGM4</accession>
<accession>Q9FMI3</accession>
<evidence type="ECO:0000256" key="1">
    <source>
        <dbReference type="SAM" id="MobiDB-lite"/>
    </source>
</evidence>
<evidence type="ECO:0000269" key="2">
    <source>
    </source>
</evidence>
<evidence type="ECO:0000269" key="3">
    <source>
    </source>
</evidence>
<evidence type="ECO:0000269" key="4">
    <source>
    </source>
</evidence>
<evidence type="ECO:0000269" key="5">
    <source>
    </source>
</evidence>
<evidence type="ECO:0000269" key="6">
    <source>
    </source>
</evidence>
<evidence type="ECO:0000269" key="7">
    <source>
    </source>
</evidence>
<evidence type="ECO:0000303" key="8">
    <source>
    </source>
</evidence>
<evidence type="ECO:0000305" key="9"/>
<evidence type="ECO:0000312" key="10">
    <source>
        <dbReference type="Araport" id="AT5G64170"/>
    </source>
</evidence>
<evidence type="ECO:0000312" key="11">
    <source>
        <dbReference type="EMBL" id="BAB10285.1"/>
    </source>
</evidence>
<evidence type="ECO:0000312" key="12">
    <source>
        <dbReference type="Proteomes" id="UP000006548"/>
    </source>
</evidence>
<feature type="chain" id="PRO_0000436031" description="Protein LNK1">
    <location>
        <begin position="1"/>
        <end position="616"/>
    </location>
</feature>
<feature type="region of interest" description="Disordered" evidence="1">
    <location>
        <begin position="72"/>
        <end position="112"/>
    </location>
</feature>
<feature type="region of interest" description="Disordered" evidence="1">
    <location>
        <begin position="361"/>
        <end position="398"/>
    </location>
</feature>
<feature type="region of interest" description="Disordered" evidence="1">
    <location>
        <begin position="410"/>
        <end position="434"/>
    </location>
</feature>
<feature type="region of interest" description="Disordered" evidence="1">
    <location>
        <begin position="567"/>
        <end position="616"/>
    </location>
</feature>
<feature type="compositionally biased region" description="Polar residues" evidence="1">
    <location>
        <begin position="371"/>
        <end position="395"/>
    </location>
</feature>
<feature type="compositionally biased region" description="Low complexity" evidence="1">
    <location>
        <begin position="567"/>
        <end position="577"/>
    </location>
</feature>
<feature type="compositionally biased region" description="Basic and acidic residues" evidence="1">
    <location>
        <begin position="594"/>
        <end position="608"/>
    </location>
</feature>
<feature type="splice variant" id="VSP_058215" description="In isoform 2.">
    <location>
        <begin position="1"/>
        <end position="50"/>
    </location>
</feature>
<feature type="mutagenesis site" description="Reduced interaction with REV4." evidence="4">
    <original>RD</original>
    <variation>GG</variation>
    <location>
        <begin position="503"/>
        <end position="504"/>
    </location>
</feature>
<feature type="mutagenesis site" description="Reduced interaction with REV4." evidence="4">
    <original>DR</original>
    <variation>GG</variation>
    <location>
        <begin position="553"/>
        <end position="554"/>
    </location>
</feature>
<feature type="sequence conflict" description="In Ref. 4; BAH19891." evidence="9" ref="4">
    <original>L</original>
    <variation>F</variation>
    <location>
        <position position="284"/>
    </location>
</feature>
<gene>
    <name evidence="8" type="primary">LNK1</name>
    <name evidence="10" type="ordered locus">At5g64170</name>
    <name evidence="11" type="ORF">MHJ24.1</name>
</gene>
<keyword id="KW-0010">Activator</keyword>
<keyword id="KW-0025">Alternative splicing</keyword>
<keyword id="KW-0090">Biological rhythms</keyword>
<keyword id="KW-0539">Nucleus</keyword>
<keyword id="KW-1185">Reference proteome</keyword>
<keyword id="KW-0804">Transcription</keyword>
<keyword id="KW-0805">Transcription regulation</keyword>
<name>LNK1_ARATH</name>
<organism evidence="12">
    <name type="scientific">Arabidopsis thaliana</name>
    <name type="common">Mouse-ear cress</name>
    <dbReference type="NCBI Taxonomy" id="3702"/>
    <lineage>
        <taxon>Eukaryota</taxon>
        <taxon>Viridiplantae</taxon>
        <taxon>Streptophyta</taxon>
        <taxon>Embryophyta</taxon>
        <taxon>Tracheophyta</taxon>
        <taxon>Spermatophyta</taxon>
        <taxon>Magnoliopsida</taxon>
        <taxon>eudicotyledons</taxon>
        <taxon>Gunneridae</taxon>
        <taxon>Pentapetalae</taxon>
        <taxon>rosids</taxon>
        <taxon>malvids</taxon>
        <taxon>Brassicales</taxon>
        <taxon>Brassicaceae</taxon>
        <taxon>Camelineae</taxon>
        <taxon>Arabidopsis</taxon>
    </lineage>
</organism>
<sequence length="616" mass="68181">MSDLYIHELGDYLSDEFHGNDDGIVPDSAYEDGGQFPILVSNRKKRRNDDMGSGTNHLKSNTFIKREANMLGKNPWPEKDSGGSSVSRDTGTGKDVQDMTLEDTNTSDHGFNGGHVDVVENFSTGDPMLCDTSAATNDGVYNYSLNSIPDAENDLSFFDNGDKEKNDLFYGWGDIGNFEDVDNMLRSCDSTFGLDSLNNEGDLGWFSSAQPNEETAGAMTDDLKPDKMLENQRTAMLQVEDFLNNSEPNHAVEDEYGYTIEDDSAQGKSSQNVFDTSLQKKDILMLDVEANLEKKQTDHLHHLDGKSDGFSENSFTLQHSGISREIMDTNQYYPPSAFQQRDVPYSHFNCEQPSVQVSACESKSGIKSENKPSPSSASNESYTSNHAQSIESLQGPTVDDRFRKVFETRANLLPGQDMPPSFAANTKKSSKTDSMVFPDAAPIQKIGLENDHRKAATELETSNMQGSSCVSSVVDDISLEATSFRQLQQVIEQLDVRTKLCIRDSLYRLAKSAEQRHHGGNRPEKGAGSHLVTGEADKYAGFMDIETDTNPIDRSIAHLLFHRPSDSSLSSDNNVLSYKSHPMIPQPNSSPSLRIEKQEETTELRPEAEVVTSDNN</sequence>
<reference key="1">
    <citation type="journal article" date="1997" name="DNA Res.">
        <title>Structural analysis of Arabidopsis thaliana chromosome 5. III. Sequence features of the regions of 1,191,918 bp covered by seventeen physically assigned P1 clones.</title>
        <authorList>
            <person name="Nakamura Y."/>
            <person name="Sato S."/>
            <person name="Kaneko T."/>
            <person name="Kotani H."/>
            <person name="Asamizu E."/>
            <person name="Miyajima N."/>
            <person name="Tabata S."/>
        </authorList>
    </citation>
    <scope>NUCLEOTIDE SEQUENCE [LARGE SCALE GENOMIC DNA]</scope>
    <source>
        <strain>cv. Columbia</strain>
    </source>
</reference>
<reference key="2">
    <citation type="journal article" date="2017" name="Plant J.">
        <title>Araport11: a complete reannotation of the Arabidopsis thaliana reference genome.</title>
        <authorList>
            <person name="Cheng C.Y."/>
            <person name="Krishnakumar V."/>
            <person name="Chan A.P."/>
            <person name="Thibaud-Nissen F."/>
            <person name="Schobel S."/>
            <person name="Town C.D."/>
        </authorList>
    </citation>
    <scope>GENOME REANNOTATION</scope>
    <source>
        <strain>cv. Columbia</strain>
    </source>
</reference>
<reference key="3">
    <citation type="submission" date="2007-03" db="EMBL/GenBank/DDBJ databases">
        <title>Arabidopsis ORF clones.</title>
        <authorList>
            <person name="Bautista V.R."/>
            <person name="Kim C.J."/>
            <person name="Chen H."/>
            <person name="Wu S.Y."/>
            <person name="De Los Reyes C."/>
            <person name="Ecker J.R."/>
        </authorList>
    </citation>
    <scope>NUCLEOTIDE SEQUENCE [LARGE SCALE MRNA] (ISOFORM 2)</scope>
    <source>
        <strain>cv. Columbia</strain>
    </source>
</reference>
<reference key="4">
    <citation type="journal article" date="2009" name="DNA Res.">
        <title>Analysis of multiple occurrences of alternative splicing events in Arabidopsis thaliana using novel sequenced full-length cDNAs.</title>
        <authorList>
            <person name="Iida K."/>
            <person name="Fukami-Kobayashi K."/>
            <person name="Toyoda A."/>
            <person name="Sakaki Y."/>
            <person name="Kobayashi M."/>
            <person name="Seki M."/>
            <person name="Shinozaki K."/>
        </authorList>
    </citation>
    <scope>NUCLEOTIDE SEQUENCE [LARGE SCALE MRNA] (ISOFORM 1)</scope>
    <source>
        <strain>cv. Columbia</strain>
    </source>
</reference>
<reference key="5">
    <citation type="journal article" date="2013" name="Proc. Natl. Acad. Sci. U.S.A.">
        <title>LNK genes integrate light and clock signaling networks at the core of the Arabidopsis oscillator.</title>
        <authorList>
            <person name="Rugnone M.L."/>
            <person name="Faigon Soverna A."/>
            <person name="Sanchez S.E."/>
            <person name="Schlaen R.G."/>
            <person name="Hernando C.E."/>
            <person name="Seymour D.K."/>
            <person name="Mancini E."/>
            <person name="Chernomoretz A."/>
            <person name="Weigel D."/>
            <person name="Mas P."/>
            <person name="Yanovsky M.J."/>
        </authorList>
    </citation>
    <scope>FUNCTION</scope>
    <scope>DISRUPTION PHENOTYPE</scope>
    <scope>INDUCTION</scope>
    <scope>SUBCELLULAR LOCATION</scope>
    <scope>GENE FAMILY</scope>
    <scope>NOMENCLATURE</scope>
</reference>
<reference key="6">
    <citation type="journal article" date="2014" name="Plant Cell Physiol.">
        <title>The EC night-time repressor plays a crucial role in modulating circadian clock transcriptional circuitry by conservatively double-checking both warm-night and night-time-light signals in a synergistic manner in Arabidopsis thaliana.</title>
        <authorList>
            <person name="Mizuno T."/>
            <person name="Kitayama M."/>
            <person name="Oka H."/>
            <person name="Tsubouchi M."/>
            <person name="Takayama C."/>
            <person name="Nomoto Y."/>
            <person name="Yamashino T."/>
        </authorList>
    </citation>
    <scope>INDUCTION BY LIGHT</scope>
</reference>
<reference key="7">
    <citation type="journal article" date="2014" name="Plant Signal. Behav.">
        <title>The LNK1 night light-inducible and clock-regulated gene is induced also in response to warm-night through the circadian clock nighttime repressor in Arabidopsis thaliana.</title>
        <authorList>
            <person name="Mizuno T."/>
            <person name="Takeuchi A."/>
            <person name="Nomoto Y."/>
            <person name="Nakamichi N."/>
            <person name="Yamashino T."/>
        </authorList>
    </citation>
    <scope>INDUCTION BY HEAT</scope>
</reference>
<reference key="8">
    <citation type="journal article" date="2014" name="Plant Cell">
        <title>LNK1 and LNK2 are transcriptional coactivators in the Arabidopsis circadian oscillator.</title>
        <authorList>
            <person name="Xie Q."/>
            <person name="Wang P."/>
            <person name="Liu X."/>
            <person name="Yuan L."/>
            <person name="Wang L."/>
            <person name="Zhang C."/>
            <person name="Li Y."/>
            <person name="Xing H."/>
            <person name="Zhi L."/>
            <person name="Yue Z."/>
            <person name="Zhao C."/>
            <person name="McClung C.R."/>
            <person name="Xu X."/>
        </authorList>
    </citation>
    <scope>FUNCTION</scope>
    <scope>SUBCELLULAR LOCATION</scope>
    <scope>DISRUPTION PHENOTYPE</scope>
    <scope>INDUCTION</scope>
    <scope>TISSUE SPECIFICITY</scope>
    <scope>INTERACTION WITH CCA1; LHY; REV4 AND REV8</scope>
    <scope>MUTAGENESIS OF 503-ARG-ASP-504 AND 553-ASP-ARG-554</scope>
</reference>
<reference key="9">
    <citation type="journal article" date="2015" name="Plant Signal. Behav.">
        <title>LNK1 and LNK2 recruitment to the evening element require morning expressed circadian related MYB-like transcription factors.</title>
        <authorList>
            <person name="Xing H."/>
            <person name="Wang P."/>
            <person name="Cui X."/>
            <person name="Zhang C."/>
            <person name="Wang L."/>
            <person name="Liu X."/>
            <person name="Yuan L."/>
            <person name="Li Y."/>
            <person name="Xie Q."/>
            <person name="Xu X."/>
        </authorList>
    </citation>
    <scope>FUNCTION</scope>
</reference>
<reference key="10">
    <citation type="journal article" date="2015" name="Proc. Natl. Acad. Sci. U.S.A.">
        <title>Time-dependent sequestration of RVE8 by LNK proteins shapes the diurnal oscillation of anthocyanin biosynthesis.</title>
        <authorList>
            <person name="Perez-Garcia P."/>
            <person name="Ma Y."/>
            <person name="Yanovsky M.J."/>
            <person name="Mas P."/>
        </authorList>
    </citation>
    <scope>FUNCTION</scope>
    <scope>INTERACTION WITH RVE8</scope>
</reference>
<dbReference type="EMBL" id="AB008266">
    <property type="protein sequence ID" value="BAB10285.1"/>
    <property type="molecule type" value="Genomic_DNA"/>
</dbReference>
<dbReference type="EMBL" id="AB008268">
    <property type="protein sequence ID" value="BAB10285.1"/>
    <property type="status" value="JOINED"/>
    <property type="molecule type" value="Genomic_DNA"/>
</dbReference>
<dbReference type="EMBL" id="CP002688">
    <property type="protein sequence ID" value="AED97849.1"/>
    <property type="molecule type" value="Genomic_DNA"/>
</dbReference>
<dbReference type="EMBL" id="CP002688">
    <property type="protein sequence ID" value="AED97850.1"/>
    <property type="molecule type" value="Genomic_DNA"/>
</dbReference>
<dbReference type="EMBL" id="CP002688">
    <property type="protein sequence ID" value="ANM68756.1"/>
    <property type="molecule type" value="Genomic_DNA"/>
</dbReference>
<dbReference type="EMBL" id="BT030360">
    <property type="protein sequence ID" value="ABO38773.1"/>
    <property type="molecule type" value="mRNA"/>
</dbReference>
<dbReference type="EMBL" id="AK317207">
    <property type="protein sequence ID" value="BAH19891.1"/>
    <property type="molecule type" value="mRNA"/>
</dbReference>
<dbReference type="RefSeq" id="NP_001078793.1">
    <molecule id="A8MQN2-1"/>
    <property type="nucleotide sequence ID" value="NM_001085324.2"/>
</dbReference>
<dbReference type="RefSeq" id="NP_001330478.1">
    <molecule id="A8MQN2-1"/>
    <property type="nucleotide sequence ID" value="NM_001345619.1"/>
</dbReference>
<dbReference type="RefSeq" id="NP_201222.1">
    <molecule id="A8MQN2-2"/>
    <property type="nucleotide sequence ID" value="NM_125813.5"/>
</dbReference>
<dbReference type="FunCoup" id="A8MQN2">
    <property type="interactions" value="320"/>
</dbReference>
<dbReference type="STRING" id="3702.A8MQN2"/>
<dbReference type="iPTMnet" id="A8MQN2"/>
<dbReference type="PaxDb" id="3702-AT5G64170.2"/>
<dbReference type="ProteomicsDB" id="238474">
    <molecule id="A8MQN2-1"/>
</dbReference>
<dbReference type="EnsemblPlants" id="AT5G64170.1">
    <molecule id="A8MQN2-2"/>
    <property type="protein sequence ID" value="AT5G64170.1"/>
    <property type="gene ID" value="AT5G64170"/>
</dbReference>
<dbReference type="EnsemblPlants" id="AT5G64170.2">
    <molecule id="A8MQN2-1"/>
    <property type="protein sequence ID" value="AT5G64170.2"/>
    <property type="gene ID" value="AT5G64170"/>
</dbReference>
<dbReference type="EnsemblPlants" id="AT5G64170.3">
    <molecule id="A8MQN2-1"/>
    <property type="protein sequence ID" value="AT5G64170.3"/>
    <property type="gene ID" value="AT5G64170"/>
</dbReference>
<dbReference type="GeneID" id="836538"/>
<dbReference type="Gramene" id="AT5G64170.1">
    <molecule id="A8MQN2-2"/>
    <property type="protein sequence ID" value="AT5G64170.1"/>
    <property type="gene ID" value="AT5G64170"/>
</dbReference>
<dbReference type="Gramene" id="AT5G64170.2">
    <molecule id="A8MQN2-1"/>
    <property type="protein sequence ID" value="AT5G64170.2"/>
    <property type="gene ID" value="AT5G64170"/>
</dbReference>
<dbReference type="Gramene" id="AT5G64170.3">
    <molecule id="A8MQN2-1"/>
    <property type="protein sequence ID" value="AT5G64170.3"/>
    <property type="gene ID" value="AT5G64170"/>
</dbReference>
<dbReference type="KEGG" id="ath:AT5G64170"/>
<dbReference type="Araport" id="AT5G64170"/>
<dbReference type="TAIR" id="AT5G64170">
    <property type="gene designation" value="LNK1"/>
</dbReference>
<dbReference type="eggNOG" id="ENOG502QY4B">
    <property type="taxonomic scope" value="Eukaryota"/>
</dbReference>
<dbReference type="InParanoid" id="A8MQN2"/>
<dbReference type="OMA" id="EGTNKCT"/>
<dbReference type="PhylomeDB" id="A8MQN2"/>
<dbReference type="PRO" id="PR:A8MQN2"/>
<dbReference type="Proteomes" id="UP000006548">
    <property type="component" value="Chromosome 5"/>
</dbReference>
<dbReference type="ExpressionAtlas" id="A8MQN2">
    <property type="expression patterns" value="baseline and differential"/>
</dbReference>
<dbReference type="GO" id="GO:0005634">
    <property type="term" value="C:nucleus"/>
    <property type="evidence" value="ECO:0000314"/>
    <property type="project" value="TAIR"/>
</dbReference>
<dbReference type="GO" id="GO:0070063">
    <property type="term" value="F:RNA polymerase binding"/>
    <property type="evidence" value="ECO:0000314"/>
    <property type="project" value="TAIR"/>
</dbReference>
<dbReference type="GO" id="GO:0003712">
    <property type="term" value="F:transcription coregulator activity"/>
    <property type="evidence" value="ECO:0000314"/>
    <property type="project" value="TAIR"/>
</dbReference>
<dbReference type="GO" id="GO:0032922">
    <property type="term" value="P:circadian regulation of gene expression"/>
    <property type="evidence" value="ECO:0000314"/>
    <property type="project" value="TAIR"/>
</dbReference>
<dbReference type="GO" id="GO:0006354">
    <property type="term" value="P:DNA-templated transcription elongation"/>
    <property type="evidence" value="ECO:0000314"/>
    <property type="project" value="TAIR"/>
</dbReference>
<dbReference type="GO" id="GO:0009649">
    <property type="term" value="P:entrainment of circadian clock"/>
    <property type="evidence" value="ECO:0000316"/>
    <property type="project" value="TAIR"/>
</dbReference>
<dbReference type="GO" id="GO:0006355">
    <property type="term" value="P:regulation of DNA-templated transcription"/>
    <property type="evidence" value="ECO:0007669"/>
    <property type="project" value="InterPro"/>
</dbReference>
<dbReference type="InterPro" id="IPR039928">
    <property type="entry name" value="LNK"/>
</dbReference>
<dbReference type="PANTHER" id="PTHR33334">
    <property type="entry name" value="PROTEIN LNK1"/>
    <property type="match status" value="1"/>
</dbReference>
<dbReference type="PANTHER" id="PTHR33334:SF8">
    <property type="entry name" value="PROTEIN LNK1"/>
    <property type="match status" value="1"/>
</dbReference>
<comment type="function">
    <text evidence="2 4 6 7">Transcriptional coactivator necessary for expression of the clock genes PRR5 and TOC1 (PubMed:25012192, PubMed:25848708). Antagonizes REV8 function in the regulation of anthocyanin accumulation (PubMed:25848001). Involved in red light input to the clock (PubMed:25012192). Activates clock-controlled genes with afternoon peak (PubMed:23818596). Mediates light inhibition of hypocotyl elongation (PubMed:23818596).</text>
</comment>
<comment type="subunit">
    <text evidence="4 6">Interacts with CCA1, LHY, REV4 and REV8, but not with PRR7 or PRR9.</text>
</comment>
<comment type="subcellular location">
    <subcellularLocation>
        <location evidence="4">Nucleus</location>
    </subcellularLocation>
</comment>
<comment type="alternative products">
    <event type="alternative splicing"/>
    <isoform>
        <id>A8MQN2-1</id>
        <name>1</name>
        <sequence type="displayed"/>
    </isoform>
    <isoform>
        <id>A8MQN2-2</id>
        <name>2</name>
        <sequence type="described" ref="VSP_058215"/>
    </isoform>
</comment>
<comment type="tissue specificity">
    <text evidence="4">Expressed in roots, stems, leaves, seedlings, cotyledons, inflorescences and siliques. Highest expression in root tips, young leaves and vasculatur tissues.</text>
</comment>
<comment type="induction">
    <text evidence="2 3 4 5">Circadian-regulation (PubMed:23818596, PubMed:25012192). Maximum levels of expression in the subjective morning (PubMed:23818596, PubMed:25012192). Up-regulated by a light pulse in the middle of the night via the phytochrome family of red/far-red light photoreceptors (PubMed:23818596, PubMed:25012192, PubMed:25332490). Up-regulated following a temperature upshift during the dark period (PubMed:24690904). Repressed by members of the TOC1/PRR1 family of clock genes (PubMed:23818596).</text>
</comment>
<comment type="disruption phenotype">
    <text evidence="2 4">No differences in hypocotyl length when grown in complete darkness, but longer hypocotyls in plants under continuous white or red light (PubMed:23818596). Lengthened circadian cycle (PubMed:25012192).</text>
</comment>
<comment type="miscellaneous">
    <text evidence="4 7">Unable to bind to DNA, but recruited to the evening element (EE)-containing region of the PRR5 and TOC1 promoters through its interaction with the DNA binding proteins REV8 and REV4 (PubMed:25012192, PubMed:25848708).</text>
</comment>
<comment type="miscellaneous">
    <text evidence="3 5">The evening complex (EC) nighttime repressor is implicated in the temperature responsiveness by binding to the LNK1 promoter (PubMed:24690904, PubMed:25332490). Also responds to some extent to a dark/light transition in an EC-independent manner (PubMed:25332490).</text>
</comment>
<protein>
    <recommendedName>
        <fullName evidence="8">Protein LNK1</fullName>
    </recommendedName>
    <alternativeName>
        <fullName evidence="8">Night light-inducible and clock-regulated 1</fullName>
    </alternativeName>
</protein>
<proteinExistence type="evidence at protein level"/>